<dbReference type="EC" id="4.2.2.10"/>
<dbReference type="EMBL" id="BA000050">
    <property type="protein sequence ID" value="BAE58358.1"/>
    <property type="status" value="ALT_SEQ"/>
    <property type="molecule type" value="Genomic_DNA"/>
</dbReference>
<dbReference type="RefSeq" id="XP_001820360.2">
    <property type="nucleotide sequence ID" value="XM_001820308.2"/>
</dbReference>
<dbReference type="SMR" id="Q2UJA7"/>
<dbReference type="STRING" id="510516.Q2UJA7"/>
<dbReference type="CAZy" id="PL1">
    <property type="family name" value="Polysaccharide Lyase Family 1"/>
</dbReference>
<dbReference type="GlyCosmos" id="Q2UJA7">
    <property type="glycosylation" value="1 site, No reported glycans"/>
</dbReference>
<dbReference type="Proteomes" id="UP000006564">
    <property type="component" value="Chromosome 2"/>
</dbReference>
<dbReference type="GO" id="GO:0005576">
    <property type="term" value="C:extracellular region"/>
    <property type="evidence" value="ECO:0007669"/>
    <property type="project" value="UniProtKB-SubCell"/>
</dbReference>
<dbReference type="GO" id="GO:0030570">
    <property type="term" value="F:pectate lyase activity"/>
    <property type="evidence" value="ECO:0007669"/>
    <property type="project" value="InterPro"/>
</dbReference>
<dbReference type="GO" id="GO:0047490">
    <property type="term" value="F:pectin lyase activity"/>
    <property type="evidence" value="ECO:0000250"/>
    <property type="project" value="UniProtKB"/>
</dbReference>
<dbReference type="GO" id="GO:0071555">
    <property type="term" value="P:cell wall organization"/>
    <property type="evidence" value="ECO:0007669"/>
    <property type="project" value="UniProtKB-KW"/>
</dbReference>
<dbReference type="GO" id="GO:0045490">
    <property type="term" value="P:pectin catabolic process"/>
    <property type="evidence" value="ECO:0000250"/>
    <property type="project" value="UniProtKB"/>
</dbReference>
<dbReference type="FunFam" id="2.160.20.10:FF:000003">
    <property type="entry name" value="Pectin lyase F"/>
    <property type="match status" value="1"/>
</dbReference>
<dbReference type="Gene3D" id="2.160.20.10">
    <property type="entry name" value="Single-stranded right-handed beta-helix, Pectin lyase-like"/>
    <property type="match status" value="1"/>
</dbReference>
<dbReference type="InterPro" id="IPR002022">
    <property type="entry name" value="Pec_lyase"/>
</dbReference>
<dbReference type="InterPro" id="IPR012334">
    <property type="entry name" value="Pectin_lyas_fold"/>
</dbReference>
<dbReference type="InterPro" id="IPR011050">
    <property type="entry name" value="Pectin_lyase_fold/virulence"/>
</dbReference>
<dbReference type="InterPro" id="IPR045032">
    <property type="entry name" value="PEL"/>
</dbReference>
<dbReference type="PANTHER" id="PTHR31683">
    <property type="entry name" value="PECTATE LYASE 18-RELATED"/>
    <property type="match status" value="1"/>
</dbReference>
<dbReference type="PANTHER" id="PTHR31683:SF67">
    <property type="entry name" value="PECTIN LYASE F-RELATED"/>
    <property type="match status" value="1"/>
</dbReference>
<dbReference type="Pfam" id="PF00544">
    <property type="entry name" value="Pectate_lyase_4"/>
    <property type="match status" value="1"/>
</dbReference>
<dbReference type="SMART" id="SM00656">
    <property type="entry name" value="Amb_all"/>
    <property type="match status" value="1"/>
</dbReference>
<dbReference type="SUPFAM" id="SSF51126">
    <property type="entry name" value="Pectin lyase-like"/>
    <property type="match status" value="1"/>
</dbReference>
<feature type="signal peptide" evidence="2">
    <location>
        <begin position="1"/>
        <end position="20"/>
    </location>
</feature>
<feature type="chain" id="PRO_0000394359" description="Probable pectin lyase F">
    <location>
        <begin position="21"/>
        <end position="428"/>
    </location>
</feature>
<feature type="region of interest" description="Disordered" evidence="3">
    <location>
        <begin position="383"/>
        <end position="428"/>
    </location>
</feature>
<feature type="compositionally biased region" description="Low complexity" evidence="3">
    <location>
        <begin position="389"/>
        <end position="417"/>
    </location>
</feature>
<feature type="compositionally biased region" description="Basic residues" evidence="3">
    <location>
        <begin position="418"/>
        <end position="428"/>
    </location>
</feature>
<feature type="active site" evidence="2">
    <location>
        <position position="257"/>
    </location>
</feature>
<feature type="glycosylation site" description="N-linked (GlcNAc...) asparagine" evidence="2">
    <location>
        <position position="276"/>
    </location>
</feature>
<feature type="disulfide bond" evidence="1">
    <location>
        <begin position="83"/>
        <end position="107"/>
    </location>
</feature>
<feature type="disulfide bond" evidence="1">
    <location>
        <begin position="324"/>
        <end position="332"/>
    </location>
</feature>
<gene>
    <name type="primary">pelF</name>
    <name type="ORF">AO090003001295</name>
</gene>
<protein>
    <recommendedName>
        <fullName>Probable pectin lyase F</fullName>
        <shortName>PLF</shortName>
        <ecNumber>4.2.2.10</ecNumber>
    </recommendedName>
</protein>
<keyword id="KW-0119">Carbohydrate metabolism</keyword>
<keyword id="KW-0961">Cell wall biogenesis/degradation</keyword>
<keyword id="KW-1015">Disulfide bond</keyword>
<keyword id="KW-0325">Glycoprotein</keyword>
<keyword id="KW-0456">Lyase</keyword>
<keyword id="KW-0624">Polysaccharide degradation</keyword>
<keyword id="KW-1185">Reference proteome</keyword>
<keyword id="KW-0964">Secreted</keyword>
<keyword id="KW-0732">Signal</keyword>
<sequence>MVLLHPLLTAAALLGASARAQSVVGTPFGFASGTTGGGNAAPAAPKDTNELKEWLADPNPRVIVIDKEFNFIGTEDTCTDCECCIPDSNTCGDAGQNAIKTEGSDWCGSYPATTCTYDNAGLEGMEVASDKTIIGVGDAGVIRGKGLRLVNGVSNIIIQNVHITELNPQYIWGGDAISLDGTDKIWVDHVKVSLVGRQMFVTGYESSGGVTVSNSEFDGQTKWSASCDGHHYWSVLGYGKGDQITFANNYIHHTSGRSPKIEFDSHWHAYNNFWENNSGHAFDVGEGANVLIEGNVFSNVKTPMNPEDTPGSTFAVNAQDASSCTSALGRPCIANELTSSGELSGNDEAVLSGWPKGEGDTKAMTTDKVPSYVKANAGVGKLGSGGSGAASSSVSITPSPTSSAIPSSSATPSSSAYARRHYARHHHY</sequence>
<proteinExistence type="inferred from homology"/>
<name>PELF_ASPOR</name>
<accession>Q2UJA7</accession>
<comment type="function">
    <text evidence="1">Pectinolytic enzymes consist of four classes of enzymes: pectin lyase, polygalacturonase, pectin methylesterase and rhamnogalacturonase. Among pectinolytic enzymes, pectin lyase is the most important in depolymerization of pectin, since it cleaves internal glycosidic bonds of highly methylated pectins (By similarity).</text>
</comment>
<comment type="catalytic activity">
    <reaction>
        <text>Eliminative cleavage of (1-&gt;4)-alpha-D-galacturonan methyl ester to give oligosaccharides with 4-deoxy-6-O-methyl-alpha-D-galact-4-enuronosyl groups at their non-reducing ends.</text>
        <dbReference type="EC" id="4.2.2.10"/>
    </reaction>
</comment>
<comment type="subcellular location">
    <subcellularLocation>
        <location evidence="1">Secreted</location>
    </subcellularLocation>
</comment>
<comment type="similarity">
    <text evidence="4">Belongs to the polysaccharide lyase 1 family.</text>
</comment>
<comment type="sequence caution" evidence="4">
    <conflict type="erroneous gene model prediction">
        <sequence resource="EMBL-CDS" id="BAE58358"/>
    </conflict>
</comment>
<reference key="1">
    <citation type="journal article" date="2005" name="Nature">
        <title>Genome sequencing and analysis of Aspergillus oryzae.</title>
        <authorList>
            <person name="Machida M."/>
            <person name="Asai K."/>
            <person name="Sano M."/>
            <person name="Tanaka T."/>
            <person name="Kumagai T."/>
            <person name="Terai G."/>
            <person name="Kusumoto K."/>
            <person name="Arima T."/>
            <person name="Akita O."/>
            <person name="Kashiwagi Y."/>
            <person name="Abe K."/>
            <person name="Gomi K."/>
            <person name="Horiuchi H."/>
            <person name="Kitamoto K."/>
            <person name="Kobayashi T."/>
            <person name="Takeuchi M."/>
            <person name="Denning D.W."/>
            <person name="Galagan J.E."/>
            <person name="Nierman W.C."/>
            <person name="Yu J."/>
            <person name="Archer D.B."/>
            <person name="Bennett J.W."/>
            <person name="Bhatnagar D."/>
            <person name="Cleveland T.E."/>
            <person name="Fedorova N.D."/>
            <person name="Gotoh O."/>
            <person name="Horikawa H."/>
            <person name="Hosoyama A."/>
            <person name="Ichinomiya M."/>
            <person name="Igarashi R."/>
            <person name="Iwashita K."/>
            <person name="Juvvadi P.R."/>
            <person name="Kato M."/>
            <person name="Kato Y."/>
            <person name="Kin T."/>
            <person name="Kokubun A."/>
            <person name="Maeda H."/>
            <person name="Maeyama N."/>
            <person name="Maruyama J."/>
            <person name="Nagasaki H."/>
            <person name="Nakajima T."/>
            <person name="Oda K."/>
            <person name="Okada K."/>
            <person name="Paulsen I."/>
            <person name="Sakamoto K."/>
            <person name="Sawano T."/>
            <person name="Takahashi M."/>
            <person name="Takase K."/>
            <person name="Terabayashi Y."/>
            <person name="Wortman J.R."/>
            <person name="Yamada O."/>
            <person name="Yamagata Y."/>
            <person name="Anazawa H."/>
            <person name="Hata Y."/>
            <person name="Koide Y."/>
            <person name="Komori T."/>
            <person name="Koyama Y."/>
            <person name="Minetoki T."/>
            <person name="Suharnan S."/>
            <person name="Tanaka A."/>
            <person name="Isono K."/>
            <person name="Kuhara S."/>
            <person name="Ogasawara N."/>
            <person name="Kikuchi H."/>
        </authorList>
    </citation>
    <scope>NUCLEOTIDE SEQUENCE [LARGE SCALE GENOMIC DNA]</scope>
    <source>
        <strain>ATCC 42149 / RIB 40</strain>
    </source>
</reference>
<organism>
    <name type="scientific">Aspergillus oryzae (strain ATCC 42149 / RIB 40)</name>
    <name type="common">Yellow koji mold</name>
    <dbReference type="NCBI Taxonomy" id="510516"/>
    <lineage>
        <taxon>Eukaryota</taxon>
        <taxon>Fungi</taxon>
        <taxon>Dikarya</taxon>
        <taxon>Ascomycota</taxon>
        <taxon>Pezizomycotina</taxon>
        <taxon>Eurotiomycetes</taxon>
        <taxon>Eurotiomycetidae</taxon>
        <taxon>Eurotiales</taxon>
        <taxon>Aspergillaceae</taxon>
        <taxon>Aspergillus</taxon>
        <taxon>Aspergillus subgen. Circumdati</taxon>
    </lineage>
</organism>
<evidence type="ECO:0000250" key="1"/>
<evidence type="ECO:0000255" key="2"/>
<evidence type="ECO:0000256" key="3">
    <source>
        <dbReference type="SAM" id="MobiDB-lite"/>
    </source>
</evidence>
<evidence type="ECO:0000305" key="4"/>